<dbReference type="EMBL" id="FM954972">
    <property type="protein sequence ID" value="CAV17572.1"/>
    <property type="molecule type" value="Genomic_DNA"/>
</dbReference>
<dbReference type="SMR" id="B7VJP8"/>
<dbReference type="STRING" id="575788.VS_0578"/>
<dbReference type="KEGG" id="vsp:VS_0578"/>
<dbReference type="eggNOG" id="COG2974">
    <property type="taxonomic scope" value="Bacteria"/>
</dbReference>
<dbReference type="HOGENOM" id="CLU_052038_1_1_6"/>
<dbReference type="Proteomes" id="UP000009100">
    <property type="component" value="Chromosome 1"/>
</dbReference>
<dbReference type="GO" id="GO:0043590">
    <property type="term" value="C:bacterial nucleoid"/>
    <property type="evidence" value="ECO:0007669"/>
    <property type="project" value="TreeGrafter"/>
</dbReference>
<dbReference type="GO" id="GO:0005737">
    <property type="term" value="C:cytoplasm"/>
    <property type="evidence" value="ECO:0007669"/>
    <property type="project" value="UniProtKB-UniRule"/>
</dbReference>
<dbReference type="GO" id="GO:0003690">
    <property type="term" value="F:double-stranded DNA binding"/>
    <property type="evidence" value="ECO:0007669"/>
    <property type="project" value="TreeGrafter"/>
</dbReference>
<dbReference type="GO" id="GO:0006310">
    <property type="term" value="P:DNA recombination"/>
    <property type="evidence" value="ECO:0007669"/>
    <property type="project" value="UniProtKB-UniRule"/>
</dbReference>
<dbReference type="GO" id="GO:0000018">
    <property type="term" value="P:regulation of DNA recombination"/>
    <property type="evidence" value="ECO:0007669"/>
    <property type="project" value="TreeGrafter"/>
</dbReference>
<dbReference type="HAMAP" id="MF_00194">
    <property type="entry name" value="RdgC"/>
    <property type="match status" value="1"/>
</dbReference>
<dbReference type="InterPro" id="IPR007476">
    <property type="entry name" value="RdgC"/>
</dbReference>
<dbReference type="NCBIfam" id="NF001462">
    <property type="entry name" value="PRK00321.1-3"/>
    <property type="match status" value="1"/>
</dbReference>
<dbReference type="NCBIfam" id="NF001464">
    <property type="entry name" value="PRK00321.1-5"/>
    <property type="match status" value="1"/>
</dbReference>
<dbReference type="PANTHER" id="PTHR38103">
    <property type="entry name" value="RECOMBINATION-ASSOCIATED PROTEIN RDGC"/>
    <property type="match status" value="1"/>
</dbReference>
<dbReference type="PANTHER" id="PTHR38103:SF1">
    <property type="entry name" value="RECOMBINATION-ASSOCIATED PROTEIN RDGC"/>
    <property type="match status" value="1"/>
</dbReference>
<dbReference type="Pfam" id="PF04381">
    <property type="entry name" value="RdgC"/>
    <property type="match status" value="1"/>
</dbReference>
<comment type="function">
    <text evidence="1">May be involved in recombination.</text>
</comment>
<comment type="subcellular location">
    <subcellularLocation>
        <location evidence="1">Cytoplasm</location>
        <location evidence="1">Nucleoid</location>
    </subcellularLocation>
</comment>
<comment type="similarity">
    <text evidence="1">Belongs to the RdgC family.</text>
</comment>
<keyword id="KW-0963">Cytoplasm</keyword>
<keyword id="KW-0233">DNA recombination</keyword>
<gene>
    <name evidence="1" type="primary">rdgC</name>
    <name type="ordered locus">VS_0578</name>
</gene>
<protein>
    <recommendedName>
        <fullName evidence="1">Recombination-associated protein RdgC</fullName>
    </recommendedName>
</protein>
<feature type="chain" id="PRO_1000193280" description="Recombination-associated protein RdgC">
    <location>
        <begin position="1"/>
        <end position="304"/>
    </location>
</feature>
<organism>
    <name type="scientific">Vibrio atlanticus (strain LGP32)</name>
    <name type="common">Vibrio splendidus (strain Mel32)</name>
    <dbReference type="NCBI Taxonomy" id="575788"/>
    <lineage>
        <taxon>Bacteria</taxon>
        <taxon>Pseudomonadati</taxon>
        <taxon>Pseudomonadota</taxon>
        <taxon>Gammaproteobacteria</taxon>
        <taxon>Vibrionales</taxon>
        <taxon>Vibrionaceae</taxon>
        <taxon>Vibrio</taxon>
    </lineage>
</organism>
<evidence type="ECO:0000255" key="1">
    <source>
        <dbReference type="HAMAP-Rule" id="MF_00194"/>
    </source>
</evidence>
<sequence>MWFKNCLVYRFNRDIDFNADQLEKQLEEFRFTPCGSQDKQKFGWVNAMGRHGDMMTHVSENRILICAKKEEKMLPASVIKDSLNAKVETLEAESGTPLKKKEKDSLKEDIIIDLLPRAFSRSNFTYALIMPKEGFIVVDASSYKKAEDVLALLRKTMGSLPVVPAIPEQAIETTLTEWVKSGDTPKGITMLDEAELKSIQEDGGIVRVKKQELEADEIKNHIEANKVVTKLLINWQDRIEFILAEDGSIKRLKFSDELKDENDDIPREDQAARFDADFSLLCGEFSVFLPNLFESLGGLTQPNA</sequence>
<proteinExistence type="inferred from homology"/>
<accession>B7VJP8</accession>
<reference key="1">
    <citation type="submission" date="2009-02" db="EMBL/GenBank/DDBJ databases">
        <title>Vibrio splendidus str. LGP32 complete genome.</title>
        <authorList>
            <person name="Mazel D."/>
            <person name="Le Roux F."/>
        </authorList>
    </citation>
    <scope>NUCLEOTIDE SEQUENCE [LARGE SCALE GENOMIC DNA]</scope>
    <source>
        <strain>LGP32</strain>
    </source>
</reference>
<name>RDGC_VIBA3</name>